<proteinExistence type="evidence at transcript level"/>
<accession>P0CV65</accession>
<organism>
    <name type="scientific">Plasmopara viticola</name>
    <name type="common">Downy mildew of grapevine</name>
    <name type="synonym">Botrytis viticola</name>
    <dbReference type="NCBI Taxonomy" id="143451"/>
    <lineage>
        <taxon>Eukaryota</taxon>
        <taxon>Sar</taxon>
        <taxon>Stramenopiles</taxon>
        <taxon>Oomycota</taxon>
        <taxon>Peronosporales</taxon>
        <taxon>Peronosporaceae</taxon>
        <taxon>Plasmopara</taxon>
    </lineage>
</organism>
<dbReference type="GO" id="GO:0005576">
    <property type="term" value="C:extracellular region"/>
    <property type="evidence" value="ECO:0007669"/>
    <property type="project" value="UniProtKB-SubCell"/>
</dbReference>
<dbReference type="GO" id="GO:0044167">
    <property type="term" value="C:host cell endoplasmic reticulum membrane"/>
    <property type="evidence" value="ECO:0007669"/>
    <property type="project" value="UniProtKB-SubCell"/>
</dbReference>
<dbReference type="GO" id="GO:0016020">
    <property type="term" value="C:membrane"/>
    <property type="evidence" value="ECO:0007669"/>
    <property type="project" value="UniProtKB-KW"/>
</dbReference>
<evidence type="ECO:0000255" key="1"/>
<evidence type="ECO:0000269" key="2">
    <source>
    </source>
</evidence>
<evidence type="ECO:0000303" key="3">
    <source>
    </source>
</evidence>
<evidence type="ECO:0000305" key="4"/>
<evidence type="ECO:0000305" key="5">
    <source>
    </source>
</evidence>
<gene>
    <name evidence="3" type="primary">RXLR151</name>
</gene>
<reference key="1">
    <citation type="journal article" date="2018" name="Front. Plant Sci.">
        <title>In planta functional analysis and subcellular localization of the oomycete pathogen Plasmopara viticola candidate RXLR effector repertoire.</title>
        <authorList>
            <person name="Liu Y."/>
            <person name="Lan X."/>
            <person name="Song S."/>
            <person name="Yin L."/>
            <person name="Dry I.B."/>
            <person name="Qu J."/>
            <person name="Xiang J."/>
            <person name="Lu J."/>
        </authorList>
    </citation>
    <scope>NUCLEOTIDE SEQUENCE [MRNA]</scope>
    <scope>DOMAIN</scope>
    <scope>FUNCTION</scope>
    <scope>SUBCELLULAR LOCATION</scope>
</reference>
<sequence length="278" mass="32231">MRNRAVLFGLFFIGYSSCVFHATPTRASLVENPDVESTHVEQWDSNGKRLLQVDGPKRILAEERGMSEGILPAAEAVEKTKVSEKAVPRASLGSKLNPMTWPKRILHKLKLWYARFLHWLLRKATVDEKTIDRSMMNGLTPSNLKRVKNDILHYSSSVPHDKIEIETDYDSYVEHFFGQFKGLDKDPPVFEMDKWNNLEKEMTKAEGYLKRRALNTVSRNIDKGLSNEQLISLDVSPFVYMRLLEKRGVFKDVENNKDKIDQLKDYIKAYKEHLMVEQ</sequence>
<protein>
    <recommendedName>
        <fullName evidence="3">Secreted RxLR effector protein 151</fullName>
    </recommendedName>
</protein>
<feature type="signal peptide" evidence="1">
    <location>
        <begin position="1"/>
        <end position="18"/>
    </location>
</feature>
<feature type="chain" id="PRO_0000447975" description="Secreted RxLR effector protein 151">
    <location>
        <begin position="19"/>
        <end position="278"/>
    </location>
</feature>
<feature type="short sequence motif" description="RxLR-dEER" evidence="5">
    <location>
        <begin position="49"/>
        <end position="64"/>
    </location>
</feature>
<comment type="function">
    <text evidence="2">Secreted effector that completely suppresses the host cell death induced by cell death-inducing proteins.</text>
</comment>
<comment type="subcellular location">
    <subcellularLocation>
        <location evidence="2">Secreted</location>
    </subcellularLocation>
    <subcellularLocation>
        <location evidence="2">Host endoplasmic reticulum membrane</location>
    </subcellularLocation>
</comment>
<comment type="domain">
    <text evidence="5">The RxLR-dEER motif acts to carry the protein into the host cell cytoplasm through binding to cell surface phosphatidylinositol-3-phosphate.</text>
</comment>
<comment type="similarity">
    <text evidence="4">Belongs to the RxLR effector family.</text>
</comment>
<name>RL151_PLAVT</name>
<keyword id="KW-1038">Host endoplasmic reticulum</keyword>
<keyword id="KW-1043">Host membrane</keyword>
<keyword id="KW-0472">Membrane</keyword>
<keyword id="KW-0964">Secreted</keyword>
<keyword id="KW-0732">Signal</keyword>
<keyword id="KW-0843">Virulence</keyword>